<dbReference type="EC" id="2.1.1.195" evidence="1"/>
<dbReference type="EMBL" id="CP000825">
    <property type="protein sequence ID" value="ABV49653.1"/>
    <property type="molecule type" value="Genomic_DNA"/>
</dbReference>
<dbReference type="RefSeq" id="WP_012006838.1">
    <property type="nucleotide sequence ID" value="NC_009840.1"/>
</dbReference>
<dbReference type="SMR" id="A8G222"/>
<dbReference type="STRING" id="93060.P9215_00341"/>
<dbReference type="KEGG" id="pmh:P9215_00341"/>
<dbReference type="eggNOG" id="COG1903">
    <property type="taxonomic scope" value="Bacteria"/>
</dbReference>
<dbReference type="HOGENOM" id="CLU_041273_1_2_3"/>
<dbReference type="OrthoDB" id="6439987at2"/>
<dbReference type="UniPathway" id="UPA00148">
    <property type="reaction ID" value="UER00227"/>
</dbReference>
<dbReference type="Proteomes" id="UP000002014">
    <property type="component" value="Chromosome"/>
</dbReference>
<dbReference type="GO" id="GO:0043780">
    <property type="term" value="F:cobalt-precorrin-5B C1-methyltransferase activity"/>
    <property type="evidence" value="ECO:0007669"/>
    <property type="project" value="RHEA"/>
</dbReference>
<dbReference type="GO" id="GO:0019251">
    <property type="term" value="P:anaerobic cobalamin biosynthetic process"/>
    <property type="evidence" value="ECO:0007669"/>
    <property type="project" value="UniProtKB-UniRule"/>
</dbReference>
<dbReference type="GO" id="GO:0032259">
    <property type="term" value="P:methylation"/>
    <property type="evidence" value="ECO:0007669"/>
    <property type="project" value="UniProtKB-KW"/>
</dbReference>
<dbReference type="Gene3D" id="3.30.2110.10">
    <property type="entry name" value="CbiD-like"/>
    <property type="match status" value="1"/>
</dbReference>
<dbReference type="HAMAP" id="MF_00787">
    <property type="entry name" value="CbiD"/>
    <property type="match status" value="1"/>
</dbReference>
<dbReference type="InterPro" id="IPR002748">
    <property type="entry name" value="CbiD"/>
</dbReference>
<dbReference type="InterPro" id="IPR036074">
    <property type="entry name" value="CbiD_sf"/>
</dbReference>
<dbReference type="NCBIfam" id="TIGR00312">
    <property type="entry name" value="cbiD"/>
    <property type="match status" value="1"/>
</dbReference>
<dbReference type="PANTHER" id="PTHR35863">
    <property type="entry name" value="COBALT-PRECORRIN-5B C(1)-METHYLTRANSFERASE"/>
    <property type="match status" value="1"/>
</dbReference>
<dbReference type="PANTHER" id="PTHR35863:SF1">
    <property type="entry name" value="COBALT-PRECORRIN-5B C(1)-METHYLTRANSFERASE"/>
    <property type="match status" value="1"/>
</dbReference>
<dbReference type="Pfam" id="PF01888">
    <property type="entry name" value="CbiD"/>
    <property type="match status" value="1"/>
</dbReference>
<dbReference type="PIRSF" id="PIRSF026782">
    <property type="entry name" value="CbiD"/>
    <property type="match status" value="1"/>
</dbReference>
<dbReference type="SUPFAM" id="SSF111342">
    <property type="entry name" value="CbiD-like"/>
    <property type="match status" value="1"/>
</dbReference>
<evidence type="ECO:0000255" key="1">
    <source>
        <dbReference type="HAMAP-Rule" id="MF_00787"/>
    </source>
</evidence>
<sequence>MKKGFSLPLWVAGAARSALKKLVGLSFENYELIKIPYEKKEIKIEIHSVGLLKNDSHALGITFAKSGLDLDITQNLEIWTIASLEKISFENSLQRVPINIIAGSGVGIKEDTSEICISNFAKEVLYENLLDIIPEGFNLKLEIIFPNGAFLAERTSNQSFGIVDGLSIIGTSAETYSSASPDQLEEAKNNLAKLIQNDFKGEVVFVIGENGLNLLKTHNVNLPIIKIGNWIGPLLVDAAIKKVKTVILFGYHGKLIKLAGGIFHTHNHLADGRIEILVYLAVQENVPFEIIVKLSKLDNIENALLFLEKFNQSTADKLFKRLSNTIEKRSFAYVNRYVKTDMEIASIIFDRKRKIRWAGIYGKKYISYFQ</sequence>
<keyword id="KW-0169">Cobalamin biosynthesis</keyword>
<keyword id="KW-0489">Methyltransferase</keyword>
<keyword id="KW-0949">S-adenosyl-L-methionine</keyword>
<keyword id="KW-0808">Transferase</keyword>
<organism>
    <name type="scientific">Prochlorococcus marinus (strain MIT 9215)</name>
    <dbReference type="NCBI Taxonomy" id="93060"/>
    <lineage>
        <taxon>Bacteria</taxon>
        <taxon>Bacillati</taxon>
        <taxon>Cyanobacteriota</taxon>
        <taxon>Cyanophyceae</taxon>
        <taxon>Synechococcales</taxon>
        <taxon>Prochlorococcaceae</taxon>
        <taxon>Prochlorococcus</taxon>
    </lineage>
</organism>
<accession>A8G222</accession>
<gene>
    <name evidence="1" type="primary">cbiD</name>
    <name type="ordered locus">P9215_00341</name>
</gene>
<reference key="1">
    <citation type="journal article" date="2007" name="PLoS Genet.">
        <title>Patterns and implications of gene gain and loss in the evolution of Prochlorococcus.</title>
        <authorList>
            <person name="Kettler G.C."/>
            <person name="Martiny A.C."/>
            <person name="Huang K."/>
            <person name="Zucker J."/>
            <person name="Coleman M.L."/>
            <person name="Rodrigue S."/>
            <person name="Chen F."/>
            <person name="Lapidus A."/>
            <person name="Ferriera S."/>
            <person name="Johnson J."/>
            <person name="Steglich C."/>
            <person name="Church G.M."/>
            <person name="Richardson P."/>
            <person name="Chisholm S.W."/>
        </authorList>
    </citation>
    <scope>NUCLEOTIDE SEQUENCE [LARGE SCALE GENOMIC DNA]</scope>
    <source>
        <strain>MIT 9215</strain>
    </source>
</reference>
<protein>
    <recommendedName>
        <fullName evidence="1">Cobalt-precorrin-5B C(1)-methyltransferase</fullName>
        <ecNumber evidence="1">2.1.1.195</ecNumber>
    </recommendedName>
    <alternativeName>
        <fullName evidence="1">Cobalt-precorrin-6A synthase</fullName>
    </alternativeName>
</protein>
<proteinExistence type="inferred from homology"/>
<name>CBID_PROM2</name>
<feature type="chain" id="PRO_1000062248" description="Cobalt-precorrin-5B C(1)-methyltransferase">
    <location>
        <begin position="1"/>
        <end position="370"/>
    </location>
</feature>
<comment type="function">
    <text evidence="1">Catalyzes the methylation of C-1 in cobalt-precorrin-5B to form cobalt-precorrin-6A.</text>
</comment>
<comment type="catalytic activity">
    <reaction evidence="1">
        <text>Co-precorrin-5B + S-adenosyl-L-methionine = Co-precorrin-6A + S-adenosyl-L-homocysteine</text>
        <dbReference type="Rhea" id="RHEA:26285"/>
        <dbReference type="ChEBI" id="CHEBI:57856"/>
        <dbReference type="ChEBI" id="CHEBI:59789"/>
        <dbReference type="ChEBI" id="CHEBI:60063"/>
        <dbReference type="ChEBI" id="CHEBI:60064"/>
        <dbReference type="EC" id="2.1.1.195"/>
    </reaction>
</comment>
<comment type="pathway">
    <text evidence="1">Cofactor biosynthesis; adenosylcobalamin biosynthesis; cob(II)yrinate a,c-diamide from sirohydrochlorin (anaerobic route): step 6/10.</text>
</comment>
<comment type="similarity">
    <text evidence="1">Belongs to the CbiD family.</text>
</comment>